<accession>B1JDF0</accession>
<evidence type="ECO:0000255" key="1">
    <source>
        <dbReference type="HAMAP-Rule" id="MF_01643"/>
    </source>
</evidence>
<proteinExistence type="inferred from homology"/>
<keyword id="KW-0067">ATP-binding</keyword>
<keyword id="KW-0436">Ligase</keyword>
<keyword id="KW-0460">Magnesium</keyword>
<keyword id="KW-0479">Metal-binding</keyword>
<keyword id="KW-0547">Nucleotide-binding</keyword>
<keyword id="KW-0658">Purine biosynthesis</keyword>
<gene>
    <name evidence="1" type="primary">purT</name>
    <name type="ordered locus">PputW619_4162</name>
</gene>
<comment type="function">
    <text evidence="1">Involved in the de novo purine biosynthesis. Catalyzes the transfer of formate to 5-phospho-ribosyl-glycinamide (GAR), producing 5-phospho-ribosyl-N-formylglycinamide (FGAR). Formate is provided by PurU via hydrolysis of 10-formyl-tetrahydrofolate.</text>
</comment>
<comment type="catalytic activity">
    <reaction evidence="1">
        <text>N(1)-(5-phospho-beta-D-ribosyl)glycinamide + formate + ATP = N(2)-formyl-N(1)-(5-phospho-beta-D-ribosyl)glycinamide + ADP + phosphate + H(+)</text>
        <dbReference type="Rhea" id="RHEA:24829"/>
        <dbReference type="ChEBI" id="CHEBI:15378"/>
        <dbReference type="ChEBI" id="CHEBI:15740"/>
        <dbReference type="ChEBI" id="CHEBI:30616"/>
        <dbReference type="ChEBI" id="CHEBI:43474"/>
        <dbReference type="ChEBI" id="CHEBI:143788"/>
        <dbReference type="ChEBI" id="CHEBI:147286"/>
        <dbReference type="ChEBI" id="CHEBI:456216"/>
        <dbReference type="EC" id="6.3.1.21"/>
    </reaction>
    <physiologicalReaction direction="left-to-right" evidence="1">
        <dbReference type="Rhea" id="RHEA:24830"/>
    </physiologicalReaction>
</comment>
<comment type="pathway">
    <text evidence="1">Purine metabolism; IMP biosynthesis via de novo pathway; N(2)-formyl-N(1)-(5-phospho-D-ribosyl)glycinamide from N(1)-(5-phospho-D-ribosyl)glycinamide (formate route): step 1/1.</text>
</comment>
<comment type="subunit">
    <text evidence="1">Homodimer.</text>
</comment>
<comment type="similarity">
    <text evidence="1">Belongs to the PurK/PurT family.</text>
</comment>
<protein>
    <recommendedName>
        <fullName evidence="1">Formate-dependent phosphoribosylglycinamide formyltransferase</fullName>
        <ecNumber evidence="1">6.3.1.21</ecNumber>
    </recommendedName>
    <alternativeName>
        <fullName evidence="1">5'-phosphoribosylglycinamide transformylase 2</fullName>
    </alternativeName>
    <alternativeName>
        <fullName evidence="1">Formate-dependent GAR transformylase</fullName>
    </alternativeName>
    <alternativeName>
        <fullName evidence="1">GAR transformylase 2</fullName>
        <shortName evidence="1">GART 2</shortName>
    </alternativeName>
    <alternativeName>
        <fullName evidence="1">Non-folate glycinamide ribonucleotide transformylase</fullName>
    </alternativeName>
    <alternativeName>
        <fullName evidence="1">Phosphoribosylglycinamide formyltransferase 2</fullName>
    </alternativeName>
</protein>
<feature type="chain" id="PRO_1000186889" description="Formate-dependent phosphoribosylglycinamide formyltransferase">
    <location>
        <begin position="1"/>
        <end position="393"/>
    </location>
</feature>
<feature type="domain" description="ATP-grasp" evidence="1">
    <location>
        <begin position="119"/>
        <end position="308"/>
    </location>
</feature>
<feature type="binding site" evidence="1">
    <location>
        <begin position="22"/>
        <end position="23"/>
    </location>
    <ligand>
        <name>N(1)-(5-phospho-beta-D-ribosyl)glycinamide</name>
        <dbReference type="ChEBI" id="CHEBI:143788"/>
    </ligand>
</feature>
<feature type="binding site" evidence="1">
    <location>
        <position position="82"/>
    </location>
    <ligand>
        <name>N(1)-(5-phospho-beta-D-ribosyl)glycinamide</name>
        <dbReference type="ChEBI" id="CHEBI:143788"/>
    </ligand>
</feature>
<feature type="binding site" evidence="1">
    <location>
        <position position="114"/>
    </location>
    <ligand>
        <name>ATP</name>
        <dbReference type="ChEBI" id="CHEBI:30616"/>
    </ligand>
</feature>
<feature type="binding site" evidence="1">
    <location>
        <position position="155"/>
    </location>
    <ligand>
        <name>ATP</name>
        <dbReference type="ChEBI" id="CHEBI:30616"/>
    </ligand>
</feature>
<feature type="binding site" evidence="1">
    <location>
        <begin position="160"/>
        <end position="165"/>
    </location>
    <ligand>
        <name>ATP</name>
        <dbReference type="ChEBI" id="CHEBI:30616"/>
    </ligand>
</feature>
<feature type="binding site" evidence="1">
    <location>
        <begin position="195"/>
        <end position="198"/>
    </location>
    <ligand>
        <name>ATP</name>
        <dbReference type="ChEBI" id="CHEBI:30616"/>
    </ligand>
</feature>
<feature type="binding site" evidence="1">
    <location>
        <position position="203"/>
    </location>
    <ligand>
        <name>ATP</name>
        <dbReference type="ChEBI" id="CHEBI:30616"/>
    </ligand>
</feature>
<feature type="binding site" evidence="1">
    <location>
        <position position="267"/>
    </location>
    <ligand>
        <name>Mg(2+)</name>
        <dbReference type="ChEBI" id="CHEBI:18420"/>
    </ligand>
</feature>
<feature type="binding site" evidence="1">
    <location>
        <position position="279"/>
    </location>
    <ligand>
        <name>Mg(2+)</name>
        <dbReference type="ChEBI" id="CHEBI:18420"/>
    </ligand>
</feature>
<feature type="binding site" evidence="1">
    <location>
        <position position="286"/>
    </location>
    <ligand>
        <name>N(1)-(5-phospho-beta-D-ribosyl)glycinamide</name>
        <dbReference type="ChEBI" id="CHEBI:143788"/>
    </ligand>
</feature>
<feature type="binding site" evidence="1">
    <location>
        <position position="356"/>
    </location>
    <ligand>
        <name>N(1)-(5-phospho-beta-D-ribosyl)glycinamide</name>
        <dbReference type="ChEBI" id="CHEBI:143788"/>
    </ligand>
</feature>
<feature type="binding site" evidence="1">
    <location>
        <begin position="363"/>
        <end position="364"/>
    </location>
    <ligand>
        <name>N(1)-(5-phospho-beta-D-ribosyl)glycinamide</name>
        <dbReference type="ChEBI" id="CHEBI:143788"/>
    </ligand>
</feature>
<name>PURT_PSEPW</name>
<reference key="1">
    <citation type="submission" date="2008-02" db="EMBL/GenBank/DDBJ databases">
        <title>Complete sequence of Pseudomonas putida W619.</title>
        <authorList>
            <person name="Copeland A."/>
            <person name="Lucas S."/>
            <person name="Lapidus A."/>
            <person name="Barry K."/>
            <person name="Detter J.C."/>
            <person name="Glavina del Rio T."/>
            <person name="Dalin E."/>
            <person name="Tice H."/>
            <person name="Pitluck S."/>
            <person name="Chain P."/>
            <person name="Malfatti S."/>
            <person name="Shin M."/>
            <person name="Vergez L."/>
            <person name="Schmutz J."/>
            <person name="Larimer F."/>
            <person name="Land M."/>
            <person name="Hauser L."/>
            <person name="Kyrpides N."/>
            <person name="Kim E."/>
            <person name="Taghavi S."/>
            <person name="Vangronsveld D."/>
            <person name="van der Lelie D."/>
            <person name="Richardson P."/>
        </authorList>
    </citation>
    <scope>NUCLEOTIDE SEQUENCE [LARGE SCALE GENOMIC DNA]</scope>
    <source>
        <strain>W619</strain>
    </source>
</reference>
<organism>
    <name type="scientific">Pseudomonas putida (strain W619)</name>
    <dbReference type="NCBI Taxonomy" id="390235"/>
    <lineage>
        <taxon>Bacteria</taxon>
        <taxon>Pseudomonadati</taxon>
        <taxon>Pseudomonadota</taxon>
        <taxon>Gammaproteobacteria</taxon>
        <taxon>Pseudomonadales</taxon>
        <taxon>Pseudomonadaceae</taxon>
        <taxon>Pseudomonas</taxon>
    </lineage>
</organism>
<sequence>MTRIGTPLSPTATRVLLCGCGELGKEVVIELQRLGVEVIAVDRYANAPAMQVAHRSHVVNMLDGVALRAVIEAEKPHYIVPEIEAIATATLVELENEGFNVVPTARATQLTMNREGIRRLAAEELDLPTSPYHFADTFEDYAKAVADVGYPCVVKPVMSSSGKGQSLLRSDADLQKSWDYAQEGGRAGKGRVIIEGFIDFDYEITLLTVRHVGGTTYLEPVGHRQEKGDYQESWQPQAMSPKALAESQRVAKAVTDALGGRGLFGVELFVKGDQVWFSEVSPRPHDTGLVTLISQDLSQFALHARAILGLPIPVVRQFGPSASAVILPEGQSQQTSFANLGAALSEPDTAIRLFGKPEINGQRRMGVCLARDESIEAARAKATRAAQAVKVEF</sequence>
<dbReference type="EC" id="6.3.1.21" evidence="1"/>
<dbReference type="EMBL" id="CP000949">
    <property type="protein sequence ID" value="ACA74642.1"/>
    <property type="molecule type" value="Genomic_DNA"/>
</dbReference>
<dbReference type="SMR" id="B1JDF0"/>
<dbReference type="STRING" id="390235.PputW619_4162"/>
<dbReference type="KEGG" id="ppw:PputW619_4162"/>
<dbReference type="eggNOG" id="COG0027">
    <property type="taxonomic scope" value="Bacteria"/>
</dbReference>
<dbReference type="HOGENOM" id="CLU_011534_1_3_6"/>
<dbReference type="OrthoDB" id="9804625at2"/>
<dbReference type="UniPathway" id="UPA00074">
    <property type="reaction ID" value="UER00127"/>
</dbReference>
<dbReference type="GO" id="GO:0005829">
    <property type="term" value="C:cytosol"/>
    <property type="evidence" value="ECO:0007669"/>
    <property type="project" value="TreeGrafter"/>
</dbReference>
<dbReference type="GO" id="GO:0005524">
    <property type="term" value="F:ATP binding"/>
    <property type="evidence" value="ECO:0007669"/>
    <property type="project" value="UniProtKB-UniRule"/>
</dbReference>
<dbReference type="GO" id="GO:0000287">
    <property type="term" value="F:magnesium ion binding"/>
    <property type="evidence" value="ECO:0007669"/>
    <property type="project" value="InterPro"/>
</dbReference>
<dbReference type="GO" id="GO:0043815">
    <property type="term" value="F:phosphoribosylglycinamide formyltransferase 2 activity"/>
    <property type="evidence" value="ECO:0007669"/>
    <property type="project" value="UniProtKB-UniRule"/>
</dbReference>
<dbReference type="GO" id="GO:0004644">
    <property type="term" value="F:phosphoribosylglycinamide formyltransferase activity"/>
    <property type="evidence" value="ECO:0007669"/>
    <property type="project" value="InterPro"/>
</dbReference>
<dbReference type="GO" id="GO:0006189">
    <property type="term" value="P:'de novo' IMP biosynthetic process"/>
    <property type="evidence" value="ECO:0007669"/>
    <property type="project" value="UniProtKB-UniRule"/>
</dbReference>
<dbReference type="FunFam" id="3.30.1490.20:FF:000013">
    <property type="entry name" value="Formate-dependent phosphoribosylglycinamide formyltransferase"/>
    <property type="match status" value="1"/>
</dbReference>
<dbReference type="FunFam" id="3.30.470.20:FF:000027">
    <property type="entry name" value="Formate-dependent phosphoribosylglycinamide formyltransferase"/>
    <property type="match status" value="1"/>
</dbReference>
<dbReference type="FunFam" id="3.40.50.20:FF:000007">
    <property type="entry name" value="Formate-dependent phosphoribosylglycinamide formyltransferase"/>
    <property type="match status" value="1"/>
</dbReference>
<dbReference type="Gene3D" id="3.40.50.20">
    <property type="match status" value="1"/>
</dbReference>
<dbReference type="Gene3D" id="3.30.1490.20">
    <property type="entry name" value="ATP-grasp fold, A domain"/>
    <property type="match status" value="1"/>
</dbReference>
<dbReference type="Gene3D" id="3.30.470.20">
    <property type="entry name" value="ATP-grasp fold, B domain"/>
    <property type="match status" value="1"/>
</dbReference>
<dbReference type="HAMAP" id="MF_01643">
    <property type="entry name" value="PurT"/>
    <property type="match status" value="1"/>
</dbReference>
<dbReference type="InterPro" id="IPR011761">
    <property type="entry name" value="ATP-grasp"/>
</dbReference>
<dbReference type="InterPro" id="IPR003135">
    <property type="entry name" value="ATP-grasp_carboxylate-amine"/>
</dbReference>
<dbReference type="InterPro" id="IPR013815">
    <property type="entry name" value="ATP_grasp_subdomain_1"/>
</dbReference>
<dbReference type="InterPro" id="IPR016185">
    <property type="entry name" value="PreATP-grasp_dom_sf"/>
</dbReference>
<dbReference type="InterPro" id="IPR005862">
    <property type="entry name" value="PurT"/>
</dbReference>
<dbReference type="InterPro" id="IPR054350">
    <property type="entry name" value="PurT/PurK_preATP-grasp"/>
</dbReference>
<dbReference type="InterPro" id="IPR048740">
    <property type="entry name" value="PurT_C"/>
</dbReference>
<dbReference type="NCBIfam" id="NF006766">
    <property type="entry name" value="PRK09288.1"/>
    <property type="match status" value="1"/>
</dbReference>
<dbReference type="NCBIfam" id="TIGR01142">
    <property type="entry name" value="purT"/>
    <property type="match status" value="1"/>
</dbReference>
<dbReference type="PANTHER" id="PTHR43055">
    <property type="entry name" value="FORMATE-DEPENDENT PHOSPHORIBOSYLGLYCINAMIDE FORMYLTRANSFERASE"/>
    <property type="match status" value="1"/>
</dbReference>
<dbReference type="PANTHER" id="PTHR43055:SF1">
    <property type="entry name" value="FORMATE-DEPENDENT PHOSPHORIBOSYLGLYCINAMIDE FORMYLTRANSFERASE"/>
    <property type="match status" value="1"/>
</dbReference>
<dbReference type="Pfam" id="PF02222">
    <property type="entry name" value="ATP-grasp"/>
    <property type="match status" value="1"/>
</dbReference>
<dbReference type="Pfam" id="PF21244">
    <property type="entry name" value="PurT_C"/>
    <property type="match status" value="1"/>
</dbReference>
<dbReference type="Pfam" id="PF22660">
    <property type="entry name" value="RS_preATP-grasp-like"/>
    <property type="match status" value="1"/>
</dbReference>
<dbReference type="SUPFAM" id="SSF56059">
    <property type="entry name" value="Glutathione synthetase ATP-binding domain-like"/>
    <property type="match status" value="1"/>
</dbReference>
<dbReference type="SUPFAM" id="SSF52440">
    <property type="entry name" value="PreATP-grasp domain"/>
    <property type="match status" value="1"/>
</dbReference>
<dbReference type="PROSITE" id="PS50975">
    <property type="entry name" value="ATP_GRASP"/>
    <property type="match status" value="1"/>
</dbReference>